<comment type="function">
    <text evidence="1">RNA chaperone that binds small regulatory RNA (sRNAs) and mRNAs to facilitate mRNA translational regulation in response to envelope stress, environmental stress and changes in metabolite concentrations. Also binds with high specificity to tRNAs.</text>
</comment>
<comment type="subunit">
    <text evidence="1">Homohexamer.</text>
</comment>
<comment type="similarity">
    <text evidence="1">Belongs to the Hfq family.</text>
</comment>
<name>HFQ_CAUSK</name>
<sequence length="82" mass="9329">MSTEKKQNLQDTFLNSVRKSKTPLTIFLVNGVKLQGVVSWFDNFCVLLRRDGQSQLVYKHAISTIMPAQPVQLYEPSADQDD</sequence>
<feature type="chain" id="PRO_1000080659" description="RNA-binding protein Hfq">
    <location>
        <begin position="1"/>
        <end position="82"/>
    </location>
</feature>
<feature type="domain" description="Sm" evidence="2">
    <location>
        <begin position="11"/>
        <end position="71"/>
    </location>
</feature>
<reference key="1">
    <citation type="submission" date="2008-01" db="EMBL/GenBank/DDBJ databases">
        <title>Complete sequence of chromosome of Caulobacter sp. K31.</title>
        <authorList>
            <consortium name="US DOE Joint Genome Institute"/>
            <person name="Copeland A."/>
            <person name="Lucas S."/>
            <person name="Lapidus A."/>
            <person name="Barry K."/>
            <person name="Glavina del Rio T."/>
            <person name="Dalin E."/>
            <person name="Tice H."/>
            <person name="Pitluck S."/>
            <person name="Bruce D."/>
            <person name="Goodwin L."/>
            <person name="Thompson L.S."/>
            <person name="Brettin T."/>
            <person name="Detter J.C."/>
            <person name="Han C."/>
            <person name="Schmutz J."/>
            <person name="Larimer F."/>
            <person name="Land M."/>
            <person name="Hauser L."/>
            <person name="Kyrpides N."/>
            <person name="Kim E."/>
            <person name="Stephens C."/>
            <person name="Richardson P."/>
        </authorList>
    </citation>
    <scope>NUCLEOTIDE SEQUENCE [LARGE SCALE GENOMIC DNA]</scope>
    <source>
        <strain>K31</strain>
    </source>
</reference>
<accession>B0SXF2</accession>
<protein>
    <recommendedName>
        <fullName evidence="1">RNA-binding protein Hfq</fullName>
    </recommendedName>
</protein>
<dbReference type="EMBL" id="CP000927">
    <property type="protein sequence ID" value="ABZ71737.1"/>
    <property type="molecule type" value="Genomic_DNA"/>
</dbReference>
<dbReference type="SMR" id="B0SXF2"/>
<dbReference type="STRING" id="366602.Caul_2610"/>
<dbReference type="KEGG" id="cak:Caul_2610"/>
<dbReference type="eggNOG" id="COG1923">
    <property type="taxonomic scope" value="Bacteria"/>
</dbReference>
<dbReference type="HOGENOM" id="CLU_113688_0_0_5"/>
<dbReference type="OrthoDB" id="9799751at2"/>
<dbReference type="GO" id="GO:0005829">
    <property type="term" value="C:cytosol"/>
    <property type="evidence" value="ECO:0007669"/>
    <property type="project" value="TreeGrafter"/>
</dbReference>
<dbReference type="GO" id="GO:0003723">
    <property type="term" value="F:RNA binding"/>
    <property type="evidence" value="ECO:0007669"/>
    <property type="project" value="UniProtKB-UniRule"/>
</dbReference>
<dbReference type="GO" id="GO:0006355">
    <property type="term" value="P:regulation of DNA-templated transcription"/>
    <property type="evidence" value="ECO:0007669"/>
    <property type="project" value="InterPro"/>
</dbReference>
<dbReference type="GO" id="GO:0043487">
    <property type="term" value="P:regulation of RNA stability"/>
    <property type="evidence" value="ECO:0007669"/>
    <property type="project" value="TreeGrafter"/>
</dbReference>
<dbReference type="GO" id="GO:0045974">
    <property type="term" value="P:regulation of translation, ncRNA-mediated"/>
    <property type="evidence" value="ECO:0007669"/>
    <property type="project" value="TreeGrafter"/>
</dbReference>
<dbReference type="CDD" id="cd01716">
    <property type="entry name" value="Hfq"/>
    <property type="match status" value="1"/>
</dbReference>
<dbReference type="FunFam" id="2.30.30.100:FF:000001">
    <property type="entry name" value="RNA-binding protein Hfq"/>
    <property type="match status" value="1"/>
</dbReference>
<dbReference type="Gene3D" id="2.30.30.100">
    <property type="match status" value="1"/>
</dbReference>
<dbReference type="HAMAP" id="MF_00436">
    <property type="entry name" value="Hfq"/>
    <property type="match status" value="1"/>
</dbReference>
<dbReference type="InterPro" id="IPR005001">
    <property type="entry name" value="Hfq"/>
</dbReference>
<dbReference type="InterPro" id="IPR010920">
    <property type="entry name" value="LSM_dom_sf"/>
</dbReference>
<dbReference type="InterPro" id="IPR047575">
    <property type="entry name" value="Sm"/>
</dbReference>
<dbReference type="NCBIfam" id="TIGR02383">
    <property type="entry name" value="Hfq"/>
    <property type="match status" value="1"/>
</dbReference>
<dbReference type="NCBIfam" id="NF001602">
    <property type="entry name" value="PRK00395.1"/>
    <property type="match status" value="1"/>
</dbReference>
<dbReference type="PANTHER" id="PTHR34772">
    <property type="entry name" value="RNA-BINDING PROTEIN HFQ"/>
    <property type="match status" value="1"/>
</dbReference>
<dbReference type="PANTHER" id="PTHR34772:SF1">
    <property type="entry name" value="RNA-BINDING PROTEIN HFQ"/>
    <property type="match status" value="1"/>
</dbReference>
<dbReference type="Pfam" id="PF17209">
    <property type="entry name" value="Hfq"/>
    <property type="match status" value="1"/>
</dbReference>
<dbReference type="SUPFAM" id="SSF50182">
    <property type="entry name" value="Sm-like ribonucleoproteins"/>
    <property type="match status" value="1"/>
</dbReference>
<dbReference type="PROSITE" id="PS52002">
    <property type="entry name" value="SM"/>
    <property type="match status" value="1"/>
</dbReference>
<keyword id="KW-0694">RNA-binding</keyword>
<keyword id="KW-0346">Stress response</keyword>
<organism>
    <name type="scientific">Caulobacter sp. (strain K31)</name>
    <dbReference type="NCBI Taxonomy" id="366602"/>
    <lineage>
        <taxon>Bacteria</taxon>
        <taxon>Pseudomonadati</taxon>
        <taxon>Pseudomonadota</taxon>
        <taxon>Alphaproteobacteria</taxon>
        <taxon>Caulobacterales</taxon>
        <taxon>Caulobacteraceae</taxon>
        <taxon>Caulobacter</taxon>
    </lineage>
</organism>
<proteinExistence type="inferred from homology"/>
<gene>
    <name evidence="1" type="primary">hfq</name>
    <name type="ordered locus">Caul_2610</name>
</gene>
<evidence type="ECO:0000255" key="1">
    <source>
        <dbReference type="HAMAP-Rule" id="MF_00436"/>
    </source>
</evidence>
<evidence type="ECO:0000255" key="2">
    <source>
        <dbReference type="PROSITE-ProRule" id="PRU01346"/>
    </source>
</evidence>